<evidence type="ECO:0000255" key="1">
    <source>
        <dbReference type="HAMAP-Rule" id="MF_00539"/>
    </source>
</evidence>
<evidence type="ECO:0000256" key="2">
    <source>
        <dbReference type="SAM" id="MobiDB-lite"/>
    </source>
</evidence>
<evidence type="ECO:0000305" key="3"/>
<sequence length="86" mass="9018">MAQKKGGGSTRNGRDSESKRLGVKVYGGQAINAGGIIIRQRGTRTHAGVNVGMGKDHTLFALVDGHVKFATRGEGKKQFVDVVPAA</sequence>
<gene>
    <name evidence="1" type="primary">rpmA</name>
    <name type="ordered locus">RSc2821</name>
    <name type="ORF">RS00284</name>
</gene>
<organism>
    <name type="scientific">Ralstonia nicotianae (strain ATCC BAA-1114 / GMI1000)</name>
    <name type="common">Ralstonia solanacearum</name>
    <dbReference type="NCBI Taxonomy" id="267608"/>
    <lineage>
        <taxon>Bacteria</taxon>
        <taxon>Pseudomonadati</taxon>
        <taxon>Pseudomonadota</taxon>
        <taxon>Betaproteobacteria</taxon>
        <taxon>Burkholderiales</taxon>
        <taxon>Burkholderiaceae</taxon>
        <taxon>Ralstonia</taxon>
        <taxon>Ralstonia solanacearum species complex</taxon>
    </lineage>
</organism>
<comment type="similarity">
    <text evidence="1">Belongs to the bacterial ribosomal protein bL27 family.</text>
</comment>
<proteinExistence type="inferred from homology"/>
<feature type="chain" id="PRO_0000181150" description="Large ribosomal subunit protein bL27">
    <location>
        <begin position="1"/>
        <end position="86"/>
    </location>
</feature>
<feature type="region of interest" description="Disordered" evidence="2">
    <location>
        <begin position="1"/>
        <end position="21"/>
    </location>
</feature>
<feature type="compositionally biased region" description="Gly residues" evidence="2">
    <location>
        <begin position="1"/>
        <end position="10"/>
    </location>
</feature>
<protein>
    <recommendedName>
        <fullName evidence="1">Large ribosomal subunit protein bL27</fullName>
    </recommendedName>
    <alternativeName>
        <fullName evidence="3">50S ribosomal protein L27</fullName>
    </alternativeName>
</protein>
<keyword id="KW-1185">Reference proteome</keyword>
<keyword id="KW-0687">Ribonucleoprotein</keyword>
<keyword id="KW-0689">Ribosomal protein</keyword>
<reference key="1">
    <citation type="journal article" date="2002" name="Nature">
        <title>Genome sequence of the plant pathogen Ralstonia solanacearum.</title>
        <authorList>
            <person name="Salanoubat M."/>
            <person name="Genin S."/>
            <person name="Artiguenave F."/>
            <person name="Gouzy J."/>
            <person name="Mangenot S."/>
            <person name="Arlat M."/>
            <person name="Billault A."/>
            <person name="Brottier P."/>
            <person name="Camus J.-C."/>
            <person name="Cattolico L."/>
            <person name="Chandler M."/>
            <person name="Choisne N."/>
            <person name="Claudel-Renard C."/>
            <person name="Cunnac S."/>
            <person name="Demange N."/>
            <person name="Gaspin C."/>
            <person name="Lavie M."/>
            <person name="Moisan A."/>
            <person name="Robert C."/>
            <person name="Saurin W."/>
            <person name="Schiex T."/>
            <person name="Siguier P."/>
            <person name="Thebault P."/>
            <person name="Whalen M."/>
            <person name="Wincker P."/>
            <person name="Levy M."/>
            <person name="Weissenbach J."/>
            <person name="Boucher C.A."/>
        </authorList>
    </citation>
    <scope>NUCLEOTIDE SEQUENCE [LARGE SCALE GENOMIC DNA]</scope>
    <source>
        <strain>ATCC BAA-1114 / GMI1000</strain>
    </source>
</reference>
<dbReference type="EMBL" id="AL646052">
    <property type="protein sequence ID" value="CAD16528.1"/>
    <property type="molecule type" value="Genomic_DNA"/>
</dbReference>
<dbReference type="RefSeq" id="WP_003271630.1">
    <property type="nucleotide sequence ID" value="NC_003295.1"/>
</dbReference>
<dbReference type="SMR" id="Q8XVK9"/>
<dbReference type="STRING" id="267608.RSc2821"/>
<dbReference type="EnsemblBacteria" id="CAD16528">
    <property type="protein sequence ID" value="CAD16528"/>
    <property type="gene ID" value="RSc2821"/>
</dbReference>
<dbReference type="GeneID" id="61362140"/>
<dbReference type="KEGG" id="rso:RSc2821"/>
<dbReference type="eggNOG" id="COG0211">
    <property type="taxonomic scope" value="Bacteria"/>
</dbReference>
<dbReference type="HOGENOM" id="CLU_095424_4_1_4"/>
<dbReference type="Proteomes" id="UP000001436">
    <property type="component" value="Chromosome"/>
</dbReference>
<dbReference type="GO" id="GO:0022625">
    <property type="term" value="C:cytosolic large ribosomal subunit"/>
    <property type="evidence" value="ECO:0007669"/>
    <property type="project" value="TreeGrafter"/>
</dbReference>
<dbReference type="GO" id="GO:0003735">
    <property type="term" value="F:structural constituent of ribosome"/>
    <property type="evidence" value="ECO:0007669"/>
    <property type="project" value="InterPro"/>
</dbReference>
<dbReference type="GO" id="GO:0006412">
    <property type="term" value="P:translation"/>
    <property type="evidence" value="ECO:0007669"/>
    <property type="project" value="UniProtKB-UniRule"/>
</dbReference>
<dbReference type="FunFam" id="2.40.50.100:FF:000020">
    <property type="entry name" value="50S ribosomal protein L27"/>
    <property type="match status" value="1"/>
</dbReference>
<dbReference type="Gene3D" id="2.40.50.100">
    <property type="match status" value="1"/>
</dbReference>
<dbReference type="HAMAP" id="MF_00539">
    <property type="entry name" value="Ribosomal_bL27"/>
    <property type="match status" value="1"/>
</dbReference>
<dbReference type="InterPro" id="IPR001684">
    <property type="entry name" value="Ribosomal_bL27"/>
</dbReference>
<dbReference type="InterPro" id="IPR018261">
    <property type="entry name" value="Ribosomal_bL27_CS"/>
</dbReference>
<dbReference type="NCBIfam" id="TIGR00062">
    <property type="entry name" value="L27"/>
    <property type="match status" value="1"/>
</dbReference>
<dbReference type="PANTHER" id="PTHR15893:SF0">
    <property type="entry name" value="LARGE RIBOSOMAL SUBUNIT PROTEIN BL27M"/>
    <property type="match status" value="1"/>
</dbReference>
<dbReference type="PANTHER" id="PTHR15893">
    <property type="entry name" value="RIBOSOMAL PROTEIN L27"/>
    <property type="match status" value="1"/>
</dbReference>
<dbReference type="Pfam" id="PF01016">
    <property type="entry name" value="Ribosomal_L27"/>
    <property type="match status" value="1"/>
</dbReference>
<dbReference type="PRINTS" id="PR00063">
    <property type="entry name" value="RIBOSOMALL27"/>
</dbReference>
<dbReference type="SUPFAM" id="SSF110324">
    <property type="entry name" value="Ribosomal L27 protein-like"/>
    <property type="match status" value="1"/>
</dbReference>
<dbReference type="PROSITE" id="PS00831">
    <property type="entry name" value="RIBOSOMAL_L27"/>
    <property type="match status" value="1"/>
</dbReference>
<name>RL27_RALN1</name>
<accession>Q8XVK9</accession>